<dbReference type="EC" id="2.3.2.5"/>
<dbReference type="EMBL" id="BT025409">
    <property type="protein sequence ID" value="ABF57365.1"/>
    <property type="molecule type" value="mRNA"/>
</dbReference>
<dbReference type="EMBL" id="BT025454">
    <property type="protein sequence ID" value="ABF57410.1"/>
    <property type="molecule type" value="mRNA"/>
</dbReference>
<dbReference type="EMBL" id="BT026254">
    <property type="protein sequence ID" value="ABG67093.1"/>
    <property type="molecule type" value="mRNA"/>
</dbReference>
<dbReference type="EMBL" id="BT026255">
    <property type="protein sequence ID" value="ABG67094.1"/>
    <property type="molecule type" value="mRNA"/>
</dbReference>
<dbReference type="EMBL" id="BC120182">
    <property type="protein sequence ID" value="AAI20183.1"/>
    <property type="molecule type" value="mRNA"/>
</dbReference>
<dbReference type="RefSeq" id="NP_001069408.1">
    <property type="nucleotide sequence ID" value="NM_001075940.2"/>
</dbReference>
<dbReference type="SMR" id="Q0V8G3"/>
<dbReference type="FunCoup" id="Q0V8G3">
    <property type="interactions" value="1817"/>
</dbReference>
<dbReference type="STRING" id="9913.ENSBTAP00000032205"/>
<dbReference type="PaxDb" id="9913-ENSBTAP00000032205"/>
<dbReference type="GeneID" id="530871"/>
<dbReference type="KEGG" id="bta:530871"/>
<dbReference type="CTD" id="54814"/>
<dbReference type="VEuPathDB" id="HostDB:ENSBTAG00000012176"/>
<dbReference type="eggNOG" id="KOG3946">
    <property type="taxonomic scope" value="Eukaryota"/>
</dbReference>
<dbReference type="HOGENOM" id="CLU_045003_3_0_1"/>
<dbReference type="InParanoid" id="Q0V8G3"/>
<dbReference type="OMA" id="TPFPSFW"/>
<dbReference type="OrthoDB" id="3907302at2759"/>
<dbReference type="TreeFam" id="TF315071"/>
<dbReference type="Proteomes" id="UP000009136">
    <property type="component" value="Chromosome 18"/>
</dbReference>
<dbReference type="Bgee" id="ENSBTAG00000012176">
    <property type="expression patterns" value="Expressed in prostate gland and 103 other cell types or tissues"/>
</dbReference>
<dbReference type="GO" id="GO:0000139">
    <property type="term" value="C:Golgi membrane"/>
    <property type="evidence" value="ECO:0007669"/>
    <property type="project" value="UniProtKB-SubCell"/>
</dbReference>
<dbReference type="GO" id="GO:0016603">
    <property type="term" value="F:glutaminyl-peptide cyclotransferase activity"/>
    <property type="evidence" value="ECO:0000250"/>
    <property type="project" value="UniProtKB"/>
</dbReference>
<dbReference type="GO" id="GO:0008270">
    <property type="term" value="F:zinc ion binding"/>
    <property type="evidence" value="ECO:0000250"/>
    <property type="project" value="UniProtKB"/>
</dbReference>
<dbReference type="GO" id="GO:0017186">
    <property type="term" value="P:peptidyl-pyroglutamic acid biosynthetic process, using glutaminyl-peptide cyclotransferase"/>
    <property type="evidence" value="ECO:0000250"/>
    <property type="project" value="UniProtKB"/>
</dbReference>
<dbReference type="CDD" id="cd03880">
    <property type="entry name" value="M28_QC_like"/>
    <property type="match status" value="1"/>
</dbReference>
<dbReference type="FunFam" id="3.40.630.10:FF:000053">
    <property type="entry name" value="glutaminyl-peptide cyclotransferase-like protein"/>
    <property type="match status" value="1"/>
</dbReference>
<dbReference type="Gene3D" id="3.40.630.10">
    <property type="entry name" value="Zn peptidases"/>
    <property type="match status" value="1"/>
</dbReference>
<dbReference type="InterPro" id="IPR037457">
    <property type="entry name" value="M28_QC"/>
</dbReference>
<dbReference type="InterPro" id="IPR007484">
    <property type="entry name" value="Peptidase_M28"/>
</dbReference>
<dbReference type="InterPro" id="IPR040234">
    <property type="entry name" value="QC/QCL"/>
</dbReference>
<dbReference type="PANTHER" id="PTHR12283">
    <property type="entry name" value="GLUTAMINYL-PEPTIDE CYCLOTRANSFERASE"/>
    <property type="match status" value="1"/>
</dbReference>
<dbReference type="PANTHER" id="PTHR12283:SF3">
    <property type="entry name" value="GLUTAMINYL-PEPTIDE CYCLOTRANSFERASE-LIKE PROTEIN"/>
    <property type="match status" value="1"/>
</dbReference>
<dbReference type="Pfam" id="PF04389">
    <property type="entry name" value="Peptidase_M28"/>
    <property type="match status" value="1"/>
</dbReference>
<dbReference type="SUPFAM" id="SSF53187">
    <property type="entry name" value="Zn-dependent exopeptidases"/>
    <property type="match status" value="1"/>
</dbReference>
<gene>
    <name type="primary">QPCTL</name>
</gene>
<accession>Q0V8G3</accession>
<accession>Q1JP99</accession>
<accession>Q1JPE4</accession>
<proteinExistence type="evidence at transcript level"/>
<sequence length="383" mass="42898">MPSGGRGRPRLQVGERSLLERPSPPKRRLIPRAQLLPQLLLALTVASVFYTIWRIWHSQTEELPLGRELRGPLIGSLPEARVRRVVGQLDPHRLWNTFLRPLLVVRTPGSPGNLQVRKFLEATLRTLSAGWHIELDSFTASTPVGPLDFSNVVATLDPGAARHLTLACHYDSKLFPSDSAPFVGATDSAVPCSLLLELAQALDQELGKAKERAAPMTLQLIFLDGEEALKQWGPKDSLYGSRHLAQLMESTPHGLGSTRIQAIELFMLLDLLGAPNPTFYSHFPRTARWFHRLRSIEKRLHRLNLLQSHPWEVMYFQTGEPPGSVEDDHIPFLRRGVPVLHLIATPFPSVWHTSDDSEANLHPPTVHNLSRILAVFLAEYLGL</sequence>
<comment type="function">
    <text evidence="1">Responsible for the biosynthesis of pyroglutamyl peptides.</text>
</comment>
<comment type="catalytic activity">
    <reaction>
        <text>N-terminal L-glutaminyl-[peptide] = N-terminal 5-oxo-L-prolyl-[peptide] + NH4(+)</text>
        <dbReference type="Rhea" id="RHEA:23652"/>
        <dbReference type="Rhea" id="RHEA-COMP:11736"/>
        <dbReference type="Rhea" id="RHEA-COMP:11846"/>
        <dbReference type="ChEBI" id="CHEBI:28938"/>
        <dbReference type="ChEBI" id="CHEBI:64722"/>
        <dbReference type="ChEBI" id="CHEBI:87215"/>
        <dbReference type="EC" id="2.3.2.5"/>
    </reaction>
</comment>
<comment type="subcellular location">
    <subcellularLocation>
        <location evidence="1">Golgi apparatus membrane</location>
        <topology evidence="1">Single-pass type I membrane protein</topology>
    </subcellularLocation>
</comment>
<comment type="similarity">
    <text evidence="6">Belongs to the glutaminyl-peptide cyclotransferase family.</text>
</comment>
<comment type="caution">
    <text evidence="2 3">It is unclear whether this protein requires a metal cofactor for catalysis. It was originally proposed to be a Zn(2+)-dependent metalloenzyme based on structural similarities to bacterial aminopeptidases and the observation that it can bind Zn(2+) ions, typically in a 1:1 stoichiometry (By similarity). However, a recent study suggests a Zn(2+)-independent catalytic mechanism (By similarity).</text>
</comment>
<keyword id="KW-0012">Acyltransferase</keyword>
<keyword id="KW-1015">Disulfide bond</keyword>
<keyword id="KW-0333">Golgi apparatus</keyword>
<keyword id="KW-0472">Membrane</keyword>
<keyword id="KW-0479">Metal-binding</keyword>
<keyword id="KW-1185">Reference proteome</keyword>
<keyword id="KW-0808">Transferase</keyword>
<keyword id="KW-0812">Transmembrane</keyword>
<keyword id="KW-1133">Transmembrane helix</keyword>
<keyword id="KW-0862">Zinc</keyword>
<evidence type="ECO:0000250" key="1"/>
<evidence type="ECO:0000250" key="2">
    <source>
        <dbReference type="UniProtKB" id="B7QK46"/>
    </source>
</evidence>
<evidence type="ECO:0000250" key="3">
    <source>
        <dbReference type="UniProtKB" id="Q16769"/>
    </source>
</evidence>
<evidence type="ECO:0000255" key="4"/>
<evidence type="ECO:0000256" key="5">
    <source>
        <dbReference type="SAM" id="MobiDB-lite"/>
    </source>
</evidence>
<evidence type="ECO:0000305" key="6"/>
<organism>
    <name type="scientific">Bos taurus</name>
    <name type="common">Bovine</name>
    <dbReference type="NCBI Taxonomy" id="9913"/>
    <lineage>
        <taxon>Eukaryota</taxon>
        <taxon>Metazoa</taxon>
        <taxon>Chordata</taxon>
        <taxon>Craniata</taxon>
        <taxon>Vertebrata</taxon>
        <taxon>Euteleostomi</taxon>
        <taxon>Mammalia</taxon>
        <taxon>Eutheria</taxon>
        <taxon>Laurasiatheria</taxon>
        <taxon>Artiodactyla</taxon>
        <taxon>Ruminantia</taxon>
        <taxon>Pecora</taxon>
        <taxon>Bovidae</taxon>
        <taxon>Bovinae</taxon>
        <taxon>Bos</taxon>
    </lineage>
</organism>
<reference key="1">
    <citation type="journal article" date="2005" name="BMC Genomics">
        <title>Characterization of 954 bovine full-CDS cDNA sequences.</title>
        <authorList>
            <person name="Harhay G.P."/>
            <person name="Sonstegard T.S."/>
            <person name="Keele J.W."/>
            <person name="Heaton M.P."/>
            <person name="Clawson M.L."/>
            <person name="Snelling W.M."/>
            <person name="Wiedmann R.T."/>
            <person name="Van Tassell C.P."/>
            <person name="Smith T.P.L."/>
        </authorList>
    </citation>
    <scope>NUCLEOTIDE SEQUENCE [LARGE SCALE MRNA]</scope>
</reference>
<reference key="2">
    <citation type="submission" date="2006-08" db="EMBL/GenBank/DDBJ databases">
        <authorList>
            <consortium name="NIH - Mammalian Gene Collection (MGC) project"/>
        </authorList>
    </citation>
    <scope>NUCLEOTIDE SEQUENCE [LARGE SCALE MRNA]</scope>
    <source>
        <strain>Hereford</strain>
        <tissue>Fetal medulla</tissue>
    </source>
</reference>
<feature type="chain" id="PRO_0000302001" description="Glutaminyl-peptide cyclotransferase-like protein">
    <location>
        <begin position="1"/>
        <end position="383"/>
    </location>
</feature>
<feature type="transmembrane region" description="Helical" evidence="4">
    <location>
        <begin position="35"/>
        <end position="57"/>
    </location>
</feature>
<feature type="region of interest" description="Disordered" evidence="5">
    <location>
        <begin position="1"/>
        <end position="25"/>
    </location>
</feature>
<feature type="active site" description="Proton acceptor" evidence="3">
    <location>
        <position position="226"/>
    </location>
</feature>
<feature type="active site" description="Proton acceptor" evidence="3">
    <location>
        <position position="270"/>
    </location>
</feature>
<feature type="binding site" evidence="3">
    <location>
        <position position="187"/>
    </location>
    <ligand>
        <name>Zn(2+)</name>
        <dbReference type="ChEBI" id="CHEBI:29105"/>
    </ligand>
</feature>
<feature type="binding site" evidence="3">
    <location>
        <position position="227"/>
    </location>
    <ligand>
        <name>Zn(2+)</name>
        <dbReference type="ChEBI" id="CHEBI:29105"/>
    </ligand>
</feature>
<feature type="binding site" evidence="3">
    <location>
        <position position="352"/>
    </location>
    <ligand>
        <name>Zn(2+)</name>
        <dbReference type="ChEBI" id="CHEBI:29105"/>
    </ligand>
</feature>
<feature type="disulfide bond" evidence="3">
    <location>
        <begin position="168"/>
        <end position="192"/>
    </location>
</feature>
<protein>
    <recommendedName>
        <fullName>Glutaminyl-peptide cyclotransferase-like protein</fullName>
        <ecNumber>2.3.2.5</ecNumber>
    </recommendedName>
    <alternativeName>
        <fullName>Golgi-resident glutaminyl-peptide cyclotransferase</fullName>
    </alternativeName>
    <alternativeName>
        <fullName>isoQC</fullName>
        <shortName>gQC</shortName>
    </alternativeName>
</protein>
<name>QPCTL_BOVIN</name>